<protein>
    <recommendedName>
        <fullName evidence="1">Large ribosomal subunit protein bL9</fullName>
    </recommendedName>
    <alternativeName>
        <fullName evidence="3">50S ribosomal protein L9</fullName>
    </alternativeName>
</protein>
<dbReference type="EMBL" id="AE015924">
    <property type="protein sequence ID" value="AAQ65783.1"/>
    <property type="molecule type" value="Genomic_DNA"/>
</dbReference>
<dbReference type="RefSeq" id="WP_005874868.1">
    <property type="nucleotide sequence ID" value="NC_002950.2"/>
</dbReference>
<dbReference type="SMR" id="Q7MWL1"/>
<dbReference type="STRING" id="242619.PG_0597"/>
<dbReference type="EnsemblBacteria" id="AAQ65783">
    <property type="protein sequence ID" value="AAQ65783"/>
    <property type="gene ID" value="PG_0597"/>
</dbReference>
<dbReference type="KEGG" id="pgi:PG_0597"/>
<dbReference type="PATRIC" id="fig|242619.8.peg.546"/>
<dbReference type="eggNOG" id="COG0359">
    <property type="taxonomic scope" value="Bacteria"/>
</dbReference>
<dbReference type="HOGENOM" id="CLU_078938_3_0_10"/>
<dbReference type="BioCyc" id="PGIN242619:G1G02-555-MONOMER"/>
<dbReference type="Proteomes" id="UP000000588">
    <property type="component" value="Chromosome"/>
</dbReference>
<dbReference type="GO" id="GO:1990904">
    <property type="term" value="C:ribonucleoprotein complex"/>
    <property type="evidence" value="ECO:0007669"/>
    <property type="project" value="UniProtKB-KW"/>
</dbReference>
<dbReference type="GO" id="GO:0005840">
    <property type="term" value="C:ribosome"/>
    <property type="evidence" value="ECO:0007669"/>
    <property type="project" value="UniProtKB-KW"/>
</dbReference>
<dbReference type="GO" id="GO:0019843">
    <property type="term" value="F:rRNA binding"/>
    <property type="evidence" value="ECO:0007669"/>
    <property type="project" value="UniProtKB-UniRule"/>
</dbReference>
<dbReference type="GO" id="GO:0003735">
    <property type="term" value="F:structural constituent of ribosome"/>
    <property type="evidence" value="ECO:0007669"/>
    <property type="project" value="InterPro"/>
</dbReference>
<dbReference type="GO" id="GO:0006412">
    <property type="term" value="P:translation"/>
    <property type="evidence" value="ECO:0007669"/>
    <property type="project" value="UniProtKB-UniRule"/>
</dbReference>
<dbReference type="FunFam" id="3.10.430.100:FF:000006">
    <property type="entry name" value="50S ribosomal protein L9"/>
    <property type="match status" value="1"/>
</dbReference>
<dbReference type="Gene3D" id="3.10.430.100">
    <property type="entry name" value="Ribosomal protein L9, C-terminal domain"/>
    <property type="match status" value="1"/>
</dbReference>
<dbReference type="Gene3D" id="3.40.5.10">
    <property type="entry name" value="Ribosomal protein L9, N-terminal domain"/>
    <property type="match status" value="1"/>
</dbReference>
<dbReference type="HAMAP" id="MF_00503">
    <property type="entry name" value="Ribosomal_bL9"/>
    <property type="match status" value="1"/>
</dbReference>
<dbReference type="InterPro" id="IPR000244">
    <property type="entry name" value="Ribosomal_bL9"/>
</dbReference>
<dbReference type="InterPro" id="IPR009027">
    <property type="entry name" value="Ribosomal_bL9/RNase_H1_N"/>
</dbReference>
<dbReference type="InterPro" id="IPR020594">
    <property type="entry name" value="Ribosomal_bL9_bac/chp"/>
</dbReference>
<dbReference type="InterPro" id="IPR020069">
    <property type="entry name" value="Ribosomal_bL9_C"/>
</dbReference>
<dbReference type="InterPro" id="IPR036791">
    <property type="entry name" value="Ribosomal_bL9_C_sf"/>
</dbReference>
<dbReference type="InterPro" id="IPR020070">
    <property type="entry name" value="Ribosomal_bL9_N"/>
</dbReference>
<dbReference type="InterPro" id="IPR036935">
    <property type="entry name" value="Ribosomal_bL9_N_sf"/>
</dbReference>
<dbReference type="NCBIfam" id="TIGR00158">
    <property type="entry name" value="L9"/>
    <property type="match status" value="1"/>
</dbReference>
<dbReference type="PANTHER" id="PTHR21368">
    <property type="entry name" value="50S RIBOSOMAL PROTEIN L9"/>
    <property type="match status" value="1"/>
</dbReference>
<dbReference type="Pfam" id="PF03948">
    <property type="entry name" value="Ribosomal_L9_C"/>
    <property type="match status" value="1"/>
</dbReference>
<dbReference type="Pfam" id="PF01281">
    <property type="entry name" value="Ribosomal_L9_N"/>
    <property type="match status" value="1"/>
</dbReference>
<dbReference type="SUPFAM" id="SSF55658">
    <property type="entry name" value="L9 N-domain-like"/>
    <property type="match status" value="1"/>
</dbReference>
<dbReference type="SUPFAM" id="SSF55653">
    <property type="entry name" value="Ribosomal protein L9 C-domain"/>
    <property type="match status" value="1"/>
</dbReference>
<sequence length="179" mass="19462">MQVILKEDVVNLGYKDDIVTVKDGYGRNFLIPQGKAVIASESAKKVLAENLRQRAHKIAQIKKEAEEKAASMQGISLTIKAKTSSTGTIFGSVTNIQIAEELAKKGVEVDRKIIVLKPAVKEVGNYTAVVRLHKEVTVEIPFEVVSENETIIEAKPEEAPVPVAEEPTAETEQAEVAAE</sequence>
<evidence type="ECO:0000255" key="1">
    <source>
        <dbReference type="HAMAP-Rule" id="MF_00503"/>
    </source>
</evidence>
<evidence type="ECO:0000256" key="2">
    <source>
        <dbReference type="SAM" id="MobiDB-lite"/>
    </source>
</evidence>
<evidence type="ECO:0000305" key="3"/>
<keyword id="KW-1185">Reference proteome</keyword>
<keyword id="KW-0687">Ribonucleoprotein</keyword>
<keyword id="KW-0689">Ribosomal protein</keyword>
<keyword id="KW-0694">RNA-binding</keyword>
<keyword id="KW-0699">rRNA-binding</keyword>
<organism>
    <name type="scientific">Porphyromonas gingivalis (strain ATCC BAA-308 / W83)</name>
    <dbReference type="NCBI Taxonomy" id="242619"/>
    <lineage>
        <taxon>Bacteria</taxon>
        <taxon>Pseudomonadati</taxon>
        <taxon>Bacteroidota</taxon>
        <taxon>Bacteroidia</taxon>
        <taxon>Bacteroidales</taxon>
        <taxon>Porphyromonadaceae</taxon>
        <taxon>Porphyromonas</taxon>
    </lineage>
</organism>
<reference key="1">
    <citation type="journal article" date="2003" name="J. Bacteriol.">
        <title>Complete genome sequence of the oral pathogenic bacterium Porphyromonas gingivalis strain W83.</title>
        <authorList>
            <person name="Nelson K.E."/>
            <person name="Fleischmann R.D."/>
            <person name="DeBoy R.T."/>
            <person name="Paulsen I.T."/>
            <person name="Fouts D.E."/>
            <person name="Eisen J.A."/>
            <person name="Daugherty S.C."/>
            <person name="Dodson R.J."/>
            <person name="Durkin A.S."/>
            <person name="Gwinn M.L."/>
            <person name="Haft D.H."/>
            <person name="Kolonay J.F."/>
            <person name="Nelson W.C."/>
            <person name="Mason T.M."/>
            <person name="Tallon L."/>
            <person name="Gray J."/>
            <person name="Granger D."/>
            <person name="Tettelin H."/>
            <person name="Dong H."/>
            <person name="Galvin J.L."/>
            <person name="Duncan M.J."/>
            <person name="Dewhirst F.E."/>
            <person name="Fraser C.M."/>
        </authorList>
    </citation>
    <scope>NUCLEOTIDE SEQUENCE [LARGE SCALE GENOMIC DNA]</scope>
    <source>
        <strain>ATCC BAA-308 / W83</strain>
    </source>
</reference>
<comment type="function">
    <text evidence="1">Binds to the 23S rRNA.</text>
</comment>
<comment type="similarity">
    <text evidence="1">Belongs to the bacterial ribosomal protein bL9 family.</text>
</comment>
<name>RL9_PORGI</name>
<feature type="chain" id="PRO_0000236563" description="Large ribosomal subunit protein bL9">
    <location>
        <begin position="1"/>
        <end position="179"/>
    </location>
</feature>
<feature type="region of interest" description="Disordered" evidence="2">
    <location>
        <begin position="155"/>
        <end position="179"/>
    </location>
</feature>
<feature type="compositionally biased region" description="Acidic residues" evidence="2">
    <location>
        <begin position="167"/>
        <end position="179"/>
    </location>
</feature>
<accession>Q7MWL1</accession>
<proteinExistence type="inferred from homology"/>
<gene>
    <name evidence="1" type="primary">rplI</name>
    <name type="ordered locus">PG_0597</name>
</gene>